<organismHost>
    <name type="scientific">Acheta domesticus</name>
    <name type="common">House cricket</name>
    <dbReference type="NCBI Taxonomy" id="6997"/>
</organismHost>
<organismHost>
    <name type="scientific">Chilo suppressalis</name>
    <name type="common">Asiatic rice borer moth</name>
    <dbReference type="NCBI Taxonomy" id="168631"/>
</organismHost>
<organismHost>
    <name type="scientific">Gryllus bimaculatus</name>
    <name type="common">Two-spotted cricket</name>
    <dbReference type="NCBI Taxonomy" id="6999"/>
</organismHost>
<organismHost>
    <name type="scientific">Gryllus campestris</name>
    <dbReference type="NCBI Taxonomy" id="58607"/>
</organismHost>
<organismHost>
    <name type="scientific">Spodoptera frugiperda</name>
    <name type="common">Fall armyworm</name>
    <dbReference type="NCBI Taxonomy" id="7108"/>
</organismHost>
<reference key="1">
    <citation type="journal article" date="2001" name="Virology">
        <title>Analysis of the first complete DNA sequence of an invertebrate iridovirus: coding strategy of the genome of Chilo iridescent virus.</title>
        <authorList>
            <person name="Jakob N.J."/>
            <person name="Mueller K."/>
            <person name="Bahr U."/>
            <person name="Darai G."/>
        </authorList>
    </citation>
    <scope>NUCLEOTIDE SEQUENCE [LARGE SCALE GENOMIC DNA]</scope>
</reference>
<reference key="2">
    <citation type="journal article" date="2007" name="Virol. J.">
        <title>Comparative genomic analysis of the family Iridoviridae: re-annotating and defining the core set of iridovirus genes.</title>
        <authorList>
            <person name="Eaton H.E."/>
            <person name="Metcalf J."/>
            <person name="Penny E."/>
            <person name="Tcherepanov V."/>
            <person name="Upton C."/>
            <person name="Brunetti C.R."/>
        </authorList>
    </citation>
    <scope>GENOME REANNOTATION</scope>
</reference>
<keyword id="KW-1185">Reference proteome</keyword>
<accession>Q91FE0</accession>
<dbReference type="EMBL" id="AF303741">
    <property type="protein sequence ID" value="AAK82244.1"/>
    <property type="molecule type" value="Genomic_DNA"/>
</dbReference>
<dbReference type="RefSeq" id="NP_149847.1">
    <property type="nucleotide sequence ID" value="NC_003038.1"/>
</dbReference>
<dbReference type="KEGG" id="vg:1733008"/>
<dbReference type="Proteomes" id="UP000001359">
    <property type="component" value="Genome"/>
</dbReference>
<proteinExistence type="predicted"/>
<name>384L_IIV6</name>
<gene>
    <name type="ORF">IIV6-384L</name>
</gene>
<sequence length="40" mass="4603">MNIAISFTQAFCTHDEDCLEGQCCVQRICIDCNVLKLHRM</sequence>
<protein>
    <recommendedName>
        <fullName>Uncharacterized protein 384L</fullName>
    </recommendedName>
</protein>
<feature type="chain" id="PRO_0000377876" description="Uncharacterized protein 384L">
    <location>
        <begin position="1"/>
        <end position="40"/>
    </location>
</feature>
<organism>
    <name type="scientific">Invertebrate iridescent virus 6</name>
    <name type="common">IIV-6</name>
    <name type="synonym">Chilo iridescent virus</name>
    <dbReference type="NCBI Taxonomy" id="176652"/>
    <lineage>
        <taxon>Viruses</taxon>
        <taxon>Varidnaviria</taxon>
        <taxon>Bamfordvirae</taxon>
        <taxon>Nucleocytoviricota</taxon>
        <taxon>Megaviricetes</taxon>
        <taxon>Pimascovirales</taxon>
        <taxon>Iridoviridae</taxon>
        <taxon>Betairidovirinae</taxon>
        <taxon>Iridovirus</taxon>
    </lineage>
</organism>